<sequence>MTKKQKKKLCQLQLNEIKTSDDPTKLSCSFVIFDFDVSHNNTVISKDVALEAASTIINKPIVAKYYEVDELNTSTDALGTHEAYLDTDKHGELEVKRDTAPIGVFTSEGYITEIETPDGKKEVLAADAILWSSRFKDACELLLEWYGRGININTSCEILYSNYTVQDGIEHLQSPIYFEGHAILNSEKRGEHDIVLPAYDSSKLLSFNELQRFERLVAQAATRQNNEEGEKMNKFRKVFELSHSDVRTLLYSQLDPTLDKESDSFIADVYDTYFIVNVYSWSDENSYDKYFKFNYTRTGDTVSIDFDSKTEVFMTRNWEEVVPEPIQSQLNQKDEQIKDLTKQVNQINKDKVGIEQQFNTASEKLVQLNSEVEQLKPYKEKHEKTLLEQKLSEKNEFYKAKFEALNAEEKFSTEEVQNLIHASVKQDEEGEKAVLQLNTMLVDLVSVPTETNTTIREFSSKRENLIPNDDSFESRFSQ</sequence>
<reference key="1">
    <citation type="journal article" date="1997" name="Nature">
        <title>The complete genome sequence of the Gram-positive bacterium Bacillus subtilis.</title>
        <authorList>
            <person name="Kunst F."/>
            <person name="Ogasawara N."/>
            <person name="Moszer I."/>
            <person name="Albertini A.M."/>
            <person name="Alloni G."/>
            <person name="Azevedo V."/>
            <person name="Bertero M.G."/>
            <person name="Bessieres P."/>
            <person name="Bolotin A."/>
            <person name="Borchert S."/>
            <person name="Borriss R."/>
            <person name="Boursier L."/>
            <person name="Brans A."/>
            <person name="Braun M."/>
            <person name="Brignell S.C."/>
            <person name="Bron S."/>
            <person name="Brouillet S."/>
            <person name="Bruschi C.V."/>
            <person name="Caldwell B."/>
            <person name="Capuano V."/>
            <person name="Carter N.M."/>
            <person name="Choi S.-K."/>
            <person name="Codani J.-J."/>
            <person name="Connerton I.F."/>
            <person name="Cummings N.J."/>
            <person name="Daniel R.A."/>
            <person name="Denizot F."/>
            <person name="Devine K.M."/>
            <person name="Duesterhoeft A."/>
            <person name="Ehrlich S.D."/>
            <person name="Emmerson P.T."/>
            <person name="Entian K.-D."/>
            <person name="Errington J."/>
            <person name="Fabret C."/>
            <person name="Ferrari E."/>
            <person name="Foulger D."/>
            <person name="Fritz C."/>
            <person name="Fujita M."/>
            <person name="Fujita Y."/>
            <person name="Fuma S."/>
            <person name="Galizzi A."/>
            <person name="Galleron N."/>
            <person name="Ghim S.-Y."/>
            <person name="Glaser P."/>
            <person name="Goffeau A."/>
            <person name="Golightly E.J."/>
            <person name="Grandi G."/>
            <person name="Guiseppi G."/>
            <person name="Guy B.J."/>
            <person name="Haga K."/>
            <person name="Haiech J."/>
            <person name="Harwood C.R."/>
            <person name="Henaut A."/>
            <person name="Hilbert H."/>
            <person name="Holsappel S."/>
            <person name="Hosono S."/>
            <person name="Hullo M.-F."/>
            <person name="Itaya M."/>
            <person name="Jones L.-M."/>
            <person name="Joris B."/>
            <person name="Karamata D."/>
            <person name="Kasahara Y."/>
            <person name="Klaerr-Blanchard M."/>
            <person name="Klein C."/>
            <person name="Kobayashi Y."/>
            <person name="Koetter P."/>
            <person name="Koningstein G."/>
            <person name="Krogh S."/>
            <person name="Kumano M."/>
            <person name="Kurita K."/>
            <person name="Lapidus A."/>
            <person name="Lardinois S."/>
            <person name="Lauber J."/>
            <person name="Lazarevic V."/>
            <person name="Lee S.-M."/>
            <person name="Levine A."/>
            <person name="Liu H."/>
            <person name="Masuda S."/>
            <person name="Mauel C."/>
            <person name="Medigue C."/>
            <person name="Medina N."/>
            <person name="Mellado R.P."/>
            <person name="Mizuno M."/>
            <person name="Moestl D."/>
            <person name="Nakai S."/>
            <person name="Noback M."/>
            <person name="Noone D."/>
            <person name="O'Reilly M."/>
            <person name="Ogawa K."/>
            <person name="Ogiwara A."/>
            <person name="Oudega B."/>
            <person name="Park S.-H."/>
            <person name="Parro V."/>
            <person name="Pohl T.M."/>
            <person name="Portetelle D."/>
            <person name="Porwollik S."/>
            <person name="Prescott A.M."/>
            <person name="Presecan E."/>
            <person name="Pujic P."/>
            <person name="Purnelle B."/>
            <person name="Rapoport G."/>
            <person name="Rey M."/>
            <person name="Reynolds S."/>
            <person name="Rieger M."/>
            <person name="Rivolta C."/>
            <person name="Rocha E."/>
            <person name="Roche B."/>
            <person name="Rose M."/>
            <person name="Sadaie Y."/>
            <person name="Sato T."/>
            <person name="Scanlan E."/>
            <person name="Schleich S."/>
            <person name="Schroeter R."/>
            <person name="Scoffone F."/>
            <person name="Sekiguchi J."/>
            <person name="Sekowska A."/>
            <person name="Seror S.J."/>
            <person name="Serror P."/>
            <person name="Shin B.-S."/>
            <person name="Soldo B."/>
            <person name="Sorokin A."/>
            <person name="Tacconi E."/>
            <person name="Takagi T."/>
            <person name="Takahashi H."/>
            <person name="Takemaru K."/>
            <person name="Takeuchi M."/>
            <person name="Tamakoshi A."/>
            <person name="Tanaka T."/>
            <person name="Terpstra P."/>
            <person name="Tognoni A."/>
            <person name="Tosato V."/>
            <person name="Uchiyama S."/>
            <person name="Vandenbol M."/>
            <person name="Vannier F."/>
            <person name="Vassarotti A."/>
            <person name="Viari A."/>
            <person name="Wambutt R."/>
            <person name="Wedler E."/>
            <person name="Wedler H."/>
            <person name="Weitzenegger T."/>
            <person name="Winters P."/>
            <person name="Wipat A."/>
            <person name="Yamamoto H."/>
            <person name="Yamane K."/>
            <person name="Yasumoto K."/>
            <person name="Yata K."/>
            <person name="Yoshida K."/>
            <person name="Yoshikawa H.-F."/>
            <person name="Zumstein E."/>
            <person name="Yoshikawa H."/>
            <person name="Danchin A."/>
        </authorList>
    </citation>
    <scope>NUCLEOTIDE SEQUENCE [LARGE SCALE GENOMIC DNA]</scope>
    <source>
        <strain>168</strain>
    </source>
</reference>
<proteinExistence type="predicted"/>
<keyword id="KW-0175">Coiled coil</keyword>
<keyword id="KW-1185">Reference proteome</keyword>
<organism>
    <name type="scientific">Bacillus subtilis (strain 168)</name>
    <dbReference type="NCBI Taxonomy" id="224308"/>
    <lineage>
        <taxon>Bacteria</taxon>
        <taxon>Bacillati</taxon>
        <taxon>Bacillota</taxon>
        <taxon>Bacilli</taxon>
        <taxon>Bacillales</taxon>
        <taxon>Bacillaceae</taxon>
        <taxon>Bacillus</taxon>
    </lineage>
</organism>
<dbReference type="EMBL" id="AL009126">
    <property type="protein sequence ID" value="CAB14031.1"/>
    <property type="molecule type" value="Genomic_DNA"/>
</dbReference>
<dbReference type="RefSeq" id="NP_389996.1">
    <property type="nucleotide sequence ID" value="NC_000964.3"/>
</dbReference>
<dbReference type="RefSeq" id="WP_004399245.1">
    <property type="nucleotide sequence ID" value="NZ_OZ025638.1"/>
</dbReference>
<dbReference type="SMR" id="O31954"/>
<dbReference type="FunCoup" id="O31954">
    <property type="interactions" value="41"/>
</dbReference>
<dbReference type="STRING" id="224308.BSU21130"/>
<dbReference type="PaxDb" id="224308-BSU21130"/>
<dbReference type="EnsemblBacteria" id="CAB14031">
    <property type="protein sequence ID" value="CAB14031"/>
    <property type="gene ID" value="BSU_21130"/>
</dbReference>
<dbReference type="GeneID" id="939159"/>
<dbReference type="KEGG" id="bsu:BSU21130"/>
<dbReference type="PATRIC" id="fig|224308.179.peg.2307"/>
<dbReference type="eggNOG" id="ENOG502ZQ8R">
    <property type="taxonomic scope" value="Bacteria"/>
</dbReference>
<dbReference type="InParanoid" id="O31954"/>
<dbReference type="OrthoDB" id="2329786at2"/>
<dbReference type="BioCyc" id="BSUB:BSU21130-MONOMER"/>
<dbReference type="Proteomes" id="UP000001570">
    <property type="component" value="Chromosome"/>
</dbReference>
<name>YOND_BACSU</name>
<feature type="chain" id="PRO_0000360538" description="SPbeta prophage-derived uncharacterized protein YonD">
    <location>
        <begin position="1"/>
        <end position="478"/>
    </location>
</feature>
<feature type="coiled-coil region" evidence="1">
    <location>
        <begin position="326"/>
        <end position="419"/>
    </location>
</feature>
<protein>
    <recommendedName>
        <fullName>SPbeta prophage-derived uncharacterized protein YonD</fullName>
    </recommendedName>
</protein>
<accession>O31954</accession>
<gene>
    <name type="primary">yonD</name>
    <name type="ordered locus">BSU21130</name>
</gene>
<evidence type="ECO:0000255" key="1"/>